<dbReference type="EC" id="4.1.3.1" evidence="2"/>
<dbReference type="EMBL" id="AB083050">
    <property type="protein sequence ID" value="BAB88666.1"/>
    <property type="molecule type" value="Genomic_DNA"/>
</dbReference>
<dbReference type="EMBL" id="BA000035">
    <property type="protein sequence ID" value="BAC19042.1"/>
    <property type="molecule type" value="Genomic_DNA"/>
</dbReference>
<dbReference type="RefSeq" id="WP_006768237.1">
    <property type="nucleotide sequence ID" value="NC_004369.1"/>
</dbReference>
<dbReference type="SMR" id="Q8RQN6"/>
<dbReference type="STRING" id="196164.gene:10742663"/>
<dbReference type="KEGG" id="cef:CE2232"/>
<dbReference type="eggNOG" id="COG2224">
    <property type="taxonomic scope" value="Bacteria"/>
</dbReference>
<dbReference type="HOGENOM" id="CLU_019214_2_0_11"/>
<dbReference type="OrthoDB" id="8629576at2"/>
<dbReference type="UniPathway" id="UPA00703">
    <property type="reaction ID" value="UER00719"/>
</dbReference>
<dbReference type="Proteomes" id="UP000001409">
    <property type="component" value="Chromosome"/>
</dbReference>
<dbReference type="GO" id="GO:0004451">
    <property type="term" value="F:isocitrate lyase activity"/>
    <property type="evidence" value="ECO:0007669"/>
    <property type="project" value="UniProtKB-EC"/>
</dbReference>
<dbReference type="GO" id="GO:0046872">
    <property type="term" value="F:metal ion binding"/>
    <property type="evidence" value="ECO:0007669"/>
    <property type="project" value="UniProtKB-KW"/>
</dbReference>
<dbReference type="GO" id="GO:0006097">
    <property type="term" value="P:glyoxylate cycle"/>
    <property type="evidence" value="ECO:0007669"/>
    <property type="project" value="UniProtKB-UniPathway"/>
</dbReference>
<dbReference type="GO" id="GO:0006099">
    <property type="term" value="P:tricarboxylic acid cycle"/>
    <property type="evidence" value="ECO:0007669"/>
    <property type="project" value="UniProtKB-KW"/>
</dbReference>
<dbReference type="CDD" id="cd00377">
    <property type="entry name" value="ICL_PEPM"/>
    <property type="match status" value="1"/>
</dbReference>
<dbReference type="FunFam" id="3.20.20.60:FF:000005">
    <property type="entry name" value="Isocitrate lyase"/>
    <property type="match status" value="1"/>
</dbReference>
<dbReference type="Gene3D" id="3.20.20.60">
    <property type="entry name" value="Phosphoenolpyruvate-binding domains"/>
    <property type="match status" value="1"/>
</dbReference>
<dbReference type="InterPro" id="IPR039556">
    <property type="entry name" value="ICL/PEPM"/>
</dbReference>
<dbReference type="InterPro" id="IPR006254">
    <property type="entry name" value="Isocitrate_lyase"/>
</dbReference>
<dbReference type="InterPro" id="IPR018523">
    <property type="entry name" value="Isocitrate_lyase_ph_CS"/>
</dbReference>
<dbReference type="InterPro" id="IPR015813">
    <property type="entry name" value="Pyrv/PenolPyrv_kinase-like_dom"/>
</dbReference>
<dbReference type="InterPro" id="IPR040442">
    <property type="entry name" value="Pyrv_kinase-like_dom_sf"/>
</dbReference>
<dbReference type="NCBIfam" id="TIGR01346">
    <property type="entry name" value="isocit_lyase"/>
    <property type="match status" value="2"/>
</dbReference>
<dbReference type="NCBIfam" id="NF011645">
    <property type="entry name" value="PRK15063.1"/>
    <property type="match status" value="1"/>
</dbReference>
<dbReference type="PANTHER" id="PTHR21631:SF3">
    <property type="entry name" value="BIFUNCTIONAL GLYOXYLATE CYCLE PROTEIN"/>
    <property type="match status" value="1"/>
</dbReference>
<dbReference type="PANTHER" id="PTHR21631">
    <property type="entry name" value="ISOCITRATE LYASE/MALATE SYNTHASE"/>
    <property type="match status" value="1"/>
</dbReference>
<dbReference type="Pfam" id="PF00463">
    <property type="entry name" value="ICL"/>
    <property type="match status" value="2"/>
</dbReference>
<dbReference type="PIRSF" id="PIRSF001362">
    <property type="entry name" value="Isocit_lyase"/>
    <property type="match status" value="1"/>
</dbReference>
<dbReference type="SUPFAM" id="SSF51621">
    <property type="entry name" value="Phosphoenolpyruvate/pyruvate domain"/>
    <property type="match status" value="1"/>
</dbReference>
<dbReference type="PROSITE" id="PS00161">
    <property type="entry name" value="ISOCITRATE_LYASE"/>
    <property type="match status" value="1"/>
</dbReference>
<evidence type="ECO:0000250" key="1"/>
<evidence type="ECO:0000250" key="2">
    <source>
        <dbReference type="UniProtKB" id="P42449"/>
    </source>
</evidence>
<evidence type="ECO:0000250" key="3">
    <source>
        <dbReference type="UniProtKB" id="P9WKK7"/>
    </source>
</evidence>
<evidence type="ECO:0000256" key="4">
    <source>
        <dbReference type="SAM" id="MobiDB-lite"/>
    </source>
</evidence>
<evidence type="ECO:0000305" key="5"/>
<organism>
    <name type="scientific">Corynebacterium efficiens (strain DSM 44549 / YS-314 / AJ 12310 / JCM 11189 / NBRC 100395)</name>
    <dbReference type="NCBI Taxonomy" id="196164"/>
    <lineage>
        <taxon>Bacteria</taxon>
        <taxon>Bacillati</taxon>
        <taxon>Actinomycetota</taxon>
        <taxon>Actinomycetes</taxon>
        <taxon>Mycobacteriales</taxon>
        <taxon>Corynebacteriaceae</taxon>
        <taxon>Corynebacterium</taxon>
    </lineage>
</organism>
<name>ACEA_COREF</name>
<protein>
    <recommendedName>
        <fullName evidence="2">Isocitrate lyase</fullName>
        <shortName evidence="2">ICL</shortName>
        <ecNumber evidence="2">4.1.3.1</ecNumber>
    </recommendedName>
    <alternativeName>
        <fullName evidence="2">Isocitrase</fullName>
    </alternativeName>
    <alternativeName>
        <fullName evidence="2">Isocitratase</fullName>
    </alternativeName>
</protein>
<proteinExistence type="inferred from homology"/>
<feature type="initiator methionine" description="Removed" evidence="1">
    <location>
        <position position="1"/>
    </location>
</feature>
<feature type="chain" id="PRO_0000068772" description="Isocitrate lyase">
    <location>
        <begin position="2"/>
        <end position="431"/>
    </location>
</feature>
<feature type="region of interest" description="Disordered" evidence="4">
    <location>
        <begin position="1"/>
        <end position="21"/>
    </location>
</feature>
<feature type="active site" description="Proton acceptor" evidence="3">
    <location>
        <position position="193"/>
    </location>
</feature>
<feature type="binding site" evidence="3">
    <location>
        <begin position="93"/>
        <end position="95"/>
    </location>
    <ligand>
        <name>substrate</name>
    </ligand>
</feature>
<feature type="binding site" evidence="3">
    <location>
        <position position="155"/>
    </location>
    <ligand>
        <name>Mg(2+)</name>
        <dbReference type="ChEBI" id="CHEBI:18420"/>
    </ligand>
</feature>
<feature type="binding site" evidence="3">
    <location>
        <begin position="194"/>
        <end position="195"/>
    </location>
    <ligand>
        <name>substrate</name>
    </ligand>
</feature>
<feature type="binding site" evidence="3">
    <location>
        <position position="230"/>
    </location>
    <ligand>
        <name>substrate</name>
    </ligand>
</feature>
<feature type="binding site" evidence="3">
    <location>
        <begin position="315"/>
        <end position="319"/>
    </location>
    <ligand>
        <name>substrate</name>
    </ligand>
</feature>
<feature type="binding site" evidence="3">
    <location>
        <position position="349"/>
    </location>
    <ligand>
        <name>substrate</name>
    </ligand>
</feature>
<feature type="sequence conflict" description="In Ref. 1; BAB88666." evidence="5" ref="1">
    <original>G</original>
    <variation>C</variation>
    <location>
        <position position="428"/>
    </location>
</feature>
<reference key="1">
    <citation type="submission" date="2002-04" db="EMBL/GenBank/DDBJ databases">
        <title>aceA of Corynebacterium efficiens.</title>
        <authorList>
            <person name="Hirano S."/>
            <person name="Kimura E."/>
            <person name="Kawahara Y."/>
            <person name="Sugimoto S."/>
        </authorList>
    </citation>
    <scope>NUCLEOTIDE SEQUENCE [GENOMIC DNA]</scope>
    <source>
        <strain>DSM 44549 / YS-314 / AJ 12310 / JCM 11189 / NBRC 100395</strain>
    </source>
</reference>
<reference key="2">
    <citation type="journal article" date="2003" name="Genome Res.">
        <title>Comparative complete genome sequence analysis of the amino acid replacements responsible for the thermostability of Corynebacterium efficiens.</title>
        <authorList>
            <person name="Nishio Y."/>
            <person name="Nakamura Y."/>
            <person name="Kawarabayasi Y."/>
            <person name="Usuda Y."/>
            <person name="Kimura E."/>
            <person name="Sugimoto S."/>
            <person name="Matsui K."/>
            <person name="Yamagishi A."/>
            <person name="Kikuchi H."/>
            <person name="Ikeo K."/>
            <person name="Gojobori T."/>
        </authorList>
    </citation>
    <scope>NUCLEOTIDE SEQUENCE [LARGE SCALE GENOMIC DNA]</scope>
    <source>
        <strain>DSM 44549 / YS-314 / AJ 12310 / JCM 11189 / NBRC 100395</strain>
    </source>
</reference>
<gene>
    <name type="primary">aceA</name>
    <name type="ordered locus">CE2232</name>
</gene>
<accession>Q8RQN6</accession>
<sequence>MSNVGTPRTAQEIQQDWDTNPRWNGITRDYTAEQVAELQGSVVEEHTLAKRGAEILWDAVSAEGDDYINALGALTGNQAVQQVRAGLKAVYLSGWQVAGDANLAGHTYPDQSLYPANSVPNVVRRINNALLRADEIARVEGDTSVDNWLVPIVADGEAGFGGALNVYELQKGMITAGAAGTHWEDQLASEKKCGHLGGKVLIPTQQHIRTLNSARLAADVANTPTVVIARTDAEAATLITSDVDERDRPFITGERTAEGYYHVKPGLEPCIARAKSYAPYADMIWMETGTPDLELAKKFAEGVRSEFPDQLLSYNCSPSFNWSAHLEADEIAKFQKELGAMGFKFQFITLAGFHSLNYGMFDLAYGYAREGMPAFVDLQNREFKAAEERGFTAVKHQREVGAGYFDTIATTVDPNSSTTALKGSTEEGQFH</sequence>
<keyword id="KW-0329">Glyoxylate bypass</keyword>
<keyword id="KW-0456">Lyase</keyword>
<keyword id="KW-0460">Magnesium</keyword>
<keyword id="KW-0479">Metal-binding</keyword>
<keyword id="KW-1185">Reference proteome</keyword>
<keyword id="KW-0816">Tricarboxylic acid cycle</keyword>
<comment type="function">
    <text evidence="2">Involved in the metabolic adaptation in response to environmental changes. Catalyzes the reversible formation of succinate and glyoxylate from isocitrate, a key step of the glyoxylate cycle, which operates as an anaplerotic route for replenishing the tricarboxylic acid cycle during growth on fatty acid substrates.</text>
</comment>
<comment type="catalytic activity">
    <reaction evidence="2">
        <text>D-threo-isocitrate = glyoxylate + succinate</text>
        <dbReference type="Rhea" id="RHEA:13245"/>
        <dbReference type="ChEBI" id="CHEBI:15562"/>
        <dbReference type="ChEBI" id="CHEBI:30031"/>
        <dbReference type="ChEBI" id="CHEBI:36655"/>
        <dbReference type="EC" id="4.1.3.1"/>
    </reaction>
</comment>
<comment type="cofactor">
    <cofactor evidence="2">
        <name>Mg(2+)</name>
        <dbReference type="ChEBI" id="CHEBI:18420"/>
    </cofactor>
</comment>
<comment type="pathway">
    <text evidence="2">Carbohydrate metabolism; glyoxylate cycle; (S)-malate from isocitrate: step 1/2.</text>
</comment>
<comment type="subunit">
    <text evidence="2">Homotetramer.</text>
</comment>
<comment type="similarity">
    <text evidence="5">Belongs to the isocitrate lyase/PEP mutase superfamily. Isocitrate lyase family.</text>
</comment>